<keyword id="KW-1048">Host nucleus</keyword>
<comment type="function">
    <text evidence="1">Plays a role in limiting the replication of viral DNA in keratinocytes. Recruits the host NCoR/SMRT complex to viral replication foci to mediate repression of both viral replication and transcription.</text>
</comment>
<comment type="subcellular location">
    <subcellularLocation>
        <location evidence="1">Host nucleus</location>
    </subcellularLocation>
</comment>
<comment type="similarity">
    <text evidence="3">Belongs to the papillomaviridae E8^E2C protein family.</text>
</comment>
<feature type="chain" id="PRO_0000438759" description="Protein E8^E2C">
    <location>
        <begin position="1"/>
        <end position="210"/>
    </location>
</feature>
<feature type="region of interest" description="Disordered" evidence="2">
    <location>
        <begin position="1"/>
        <end position="119"/>
    </location>
</feature>
<feature type="compositionally biased region" description="Polar residues" evidence="2">
    <location>
        <begin position="24"/>
        <end position="38"/>
    </location>
</feature>
<feature type="compositionally biased region" description="Low complexity" evidence="2">
    <location>
        <begin position="48"/>
        <end position="61"/>
    </location>
</feature>
<feature type="compositionally biased region" description="Basic residues" evidence="2">
    <location>
        <begin position="62"/>
        <end position="71"/>
    </location>
</feature>
<protein>
    <recommendedName>
        <fullName>Protein E8^E2C</fullName>
    </recommendedName>
</protein>
<dbReference type="EMBL" id="X70829">
    <property type="status" value="NOT_ANNOTATED_CDS"/>
    <property type="molecule type" value="Genomic_DNA"/>
</dbReference>
<dbReference type="SMR" id="P0DOD4"/>
<dbReference type="Proteomes" id="UP000007672">
    <property type="component" value="Genome"/>
</dbReference>
<dbReference type="GO" id="GO:0042025">
    <property type="term" value="C:host cell nucleus"/>
    <property type="evidence" value="ECO:0007669"/>
    <property type="project" value="UniProtKB-SubCell"/>
</dbReference>
<dbReference type="GO" id="GO:0003677">
    <property type="term" value="F:DNA binding"/>
    <property type="evidence" value="ECO:0007669"/>
    <property type="project" value="InterPro"/>
</dbReference>
<dbReference type="GO" id="GO:0003700">
    <property type="term" value="F:DNA-binding transcription factor activity"/>
    <property type="evidence" value="ECO:0007669"/>
    <property type="project" value="InterPro"/>
</dbReference>
<dbReference type="GO" id="GO:0006275">
    <property type="term" value="P:regulation of DNA replication"/>
    <property type="evidence" value="ECO:0007669"/>
    <property type="project" value="InterPro"/>
</dbReference>
<dbReference type="Gene3D" id="3.30.70.330">
    <property type="match status" value="1"/>
</dbReference>
<dbReference type="InterPro" id="IPR035975">
    <property type="entry name" value="E2/EBNA1_C_sf"/>
</dbReference>
<dbReference type="InterPro" id="IPR012677">
    <property type="entry name" value="Nucleotide-bd_a/b_plait_sf"/>
</dbReference>
<dbReference type="InterPro" id="IPR000427">
    <property type="entry name" value="Papillomavirus_E2_C"/>
</dbReference>
<dbReference type="Pfam" id="PF00511">
    <property type="entry name" value="PPV_E2_C"/>
    <property type="match status" value="1"/>
</dbReference>
<dbReference type="SUPFAM" id="SSF54957">
    <property type="entry name" value="Viral DNA-binding domain"/>
    <property type="match status" value="1"/>
</dbReference>
<sequence length="210" mass="23280">MKLKILLHSSTNTPSFDFEEQQLPGPSTPTYTELTQASPCGRGKSRESQPTSTTSPETSGLRVRRGRRQRKSGPGPGETPSKRRRGGGRGGGETRLESAPSPGEVGIRHRTVERQGLSRLGQLQAEARDPPMILLKGTANSLKCWRYRKQNSSNCGFLFMSTVWNWVGDVSENHSRMLIAFKSPGQRDSFVKHNLFPKLCTYTYGSLNSL</sequence>
<evidence type="ECO:0000250" key="1">
    <source>
        <dbReference type="UniProtKB" id="P0DKA0"/>
    </source>
</evidence>
<evidence type="ECO:0000256" key="2">
    <source>
        <dbReference type="SAM" id="MobiDB-lite"/>
    </source>
</evidence>
<evidence type="ECO:0000305" key="3"/>
<accession>P0DOD4</accession>
<reference key="1">
    <citation type="journal article" date="1993" name="Virology">
        <title>Two novel types of human papillomavirus, HPV 63 and HPV 65: comparisons of their clinical and histological features and DNA sequences to other HPV types.</title>
        <authorList>
            <person name="Egawa K."/>
            <person name="Delius H."/>
            <person name="Matsukura T."/>
            <person name="Kawashima M."/>
            <person name="de Villiers E.M."/>
        </authorList>
    </citation>
    <scope>NUCLEOTIDE SEQUENCE [GENOMIC DNA]</scope>
</reference>
<organism>
    <name type="scientific">Human papillomavirus 65</name>
    <dbReference type="NCBI Taxonomy" id="28312"/>
    <lineage>
        <taxon>Viruses</taxon>
        <taxon>Monodnaviria</taxon>
        <taxon>Shotokuvirae</taxon>
        <taxon>Cossaviricota</taxon>
        <taxon>Papovaviricetes</taxon>
        <taxon>Zurhausenvirales</taxon>
        <taxon>Papillomaviridae</taxon>
        <taxon>Firstpapillomavirinae</taxon>
        <taxon>Gammapapillomavirus</taxon>
        <taxon>Gammapapillomavirus 1</taxon>
    </lineage>
</organism>
<name>VE8E2_HPV65</name>
<proteinExistence type="inferred from homology"/>
<organismHost>
    <name type="scientific">Homo sapiens</name>
    <name type="common">Human</name>
    <dbReference type="NCBI Taxonomy" id="9606"/>
</organismHost>